<proteinExistence type="predicted"/>
<organismHost>
    <name type="scientific">Ictaluridae</name>
    <name type="common">bullhead catfishes</name>
    <dbReference type="NCBI Taxonomy" id="7996"/>
</organismHost>
<name>VG35_ICHVA</name>
<sequence length="238" mass="26058">MTAPMSIEPETGSSPGLTELISKWGRLSDSFLERRLTNISSARQEITAIKTENEARAKALRQSLEEDRAFWTNKITALGYKVAKRRMAMVTTEPGESTAPHLEVVHSDKGLLGLFEISAGDQLLCPSAITPFIRDRGGPGTCPLCLRTFDQKLEGHIYTELISSGHGVSRGSDGAWRAHFTGDTPPVLFPRKTLGKERAATLSAAIKQFKCLQVDHCTLEGIIESLAIKAHKILDLCE</sequence>
<dbReference type="EMBL" id="M75136">
    <property type="protein sequence ID" value="AAA88138.1"/>
    <property type="molecule type" value="Genomic_DNA"/>
</dbReference>
<dbReference type="PIR" id="I36789">
    <property type="entry name" value="I36789"/>
</dbReference>
<dbReference type="RefSeq" id="NP_041126.1">
    <property type="nucleotide sequence ID" value="NC_001493.2"/>
</dbReference>
<dbReference type="SMR" id="Q00109"/>
<dbReference type="GeneID" id="1488429"/>
<dbReference type="KEGG" id="vg:1488429"/>
<dbReference type="Proteomes" id="UP000007643">
    <property type="component" value="Segment"/>
</dbReference>
<organism>
    <name type="scientific">Ictalurid herpesvirus 1 (strain Auburn)</name>
    <name type="common">IcHV-1</name>
    <name type="synonym">Channel catfish herpesvirus</name>
    <dbReference type="NCBI Taxonomy" id="766178"/>
    <lineage>
        <taxon>Viruses</taxon>
        <taxon>Duplodnaviria</taxon>
        <taxon>Heunggongvirae</taxon>
        <taxon>Peploviricota</taxon>
        <taxon>Herviviricetes</taxon>
        <taxon>Herpesvirales</taxon>
        <taxon>Alloherpesviridae</taxon>
        <taxon>Ictavirus</taxon>
        <taxon>Ictavirus ictaluridallo1</taxon>
        <taxon>Ictalurid herpesvirus 1</taxon>
    </lineage>
</organism>
<reference key="1">
    <citation type="journal article" date="1992" name="Virology">
        <title>Channel catfish virus: a new type of herpesvirus.</title>
        <authorList>
            <person name="Davison A.J."/>
        </authorList>
    </citation>
    <scope>NUCLEOTIDE SEQUENCE [LARGE SCALE GENOMIC DNA]</scope>
</reference>
<keyword id="KW-1185">Reference proteome</keyword>
<accession>Q00109</accession>
<feature type="chain" id="PRO_0000222117" description="Uncharacterized protein ORF35">
    <location>
        <begin position="1"/>
        <end position="238"/>
    </location>
</feature>
<gene>
    <name type="primary">ORF35</name>
</gene>
<protein>
    <recommendedName>
        <fullName>Uncharacterized protein ORF35</fullName>
    </recommendedName>
</protein>